<reference key="1">
    <citation type="journal article" date="2008" name="J. Bacteriol.">
        <title>The pangenome structure of Escherichia coli: comparative genomic analysis of E. coli commensal and pathogenic isolates.</title>
        <authorList>
            <person name="Rasko D.A."/>
            <person name="Rosovitz M.J."/>
            <person name="Myers G.S.A."/>
            <person name="Mongodin E.F."/>
            <person name="Fricke W.F."/>
            <person name="Gajer P."/>
            <person name="Crabtree J."/>
            <person name="Sebaihia M."/>
            <person name="Thomson N.R."/>
            <person name="Chaudhuri R."/>
            <person name="Henderson I.R."/>
            <person name="Sperandio V."/>
            <person name="Ravel J."/>
        </authorList>
    </citation>
    <scope>NUCLEOTIDE SEQUENCE [LARGE SCALE GENOMIC DNA]</scope>
    <source>
        <strain>HS</strain>
    </source>
</reference>
<comment type="function">
    <text evidence="1">Catalyzes the attachment of threonine to tRNA(Thr) in a two-step reaction: L-threonine is first activated by ATP to form Thr-AMP and then transferred to the acceptor end of tRNA(Thr). Also edits incorrectly charged L-seryl-tRNA(Thr).</text>
</comment>
<comment type="catalytic activity">
    <reaction evidence="1">
        <text>tRNA(Thr) + L-threonine + ATP = L-threonyl-tRNA(Thr) + AMP + diphosphate + H(+)</text>
        <dbReference type="Rhea" id="RHEA:24624"/>
        <dbReference type="Rhea" id="RHEA-COMP:9670"/>
        <dbReference type="Rhea" id="RHEA-COMP:9704"/>
        <dbReference type="ChEBI" id="CHEBI:15378"/>
        <dbReference type="ChEBI" id="CHEBI:30616"/>
        <dbReference type="ChEBI" id="CHEBI:33019"/>
        <dbReference type="ChEBI" id="CHEBI:57926"/>
        <dbReference type="ChEBI" id="CHEBI:78442"/>
        <dbReference type="ChEBI" id="CHEBI:78534"/>
        <dbReference type="ChEBI" id="CHEBI:456215"/>
        <dbReference type="EC" id="6.1.1.3"/>
    </reaction>
</comment>
<comment type="cofactor">
    <cofactor evidence="1">
        <name>Zn(2+)</name>
        <dbReference type="ChEBI" id="CHEBI:29105"/>
    </cofactor>
    <text evidence="1">Binds 1 zinc ion per subunit.</text>
</comment>
<comment type="subunit">
    <text evidence="1">Homodimer.</text>
</comment>
<comment type="subcellular location">
    <subcellularLocation>
        <location evidence="1">Cytoplasm</location>
    </subcellularLocation>
</comment>
<comment type="similarity">
    <text evidence="1">Belongs to the class-II aminoacyl-tRNA synthetase family.</text>
</comment>
<evidence type="ECO:0000255" key="1">
    <source>
        <dbReference type="HAMAP-Rule" id="MF_00184"/>
    </source>
</evidence>
<evidence type="ECO:0000255" key="2">
    <source>
        <dbReference type="PROSITE-ProRule" id="PRU01228"/>
    </source>
</evidence>
<organism>
    <name type="scientific">Escherichia coli O9:H4 (strain HS)</name>
    <dbReference type="NCBI Taxonomy" id="331112"/>
    <lineage>
        <taxon>Bacteria</taxon>
        <taxon>Pseudomonadati</taxon>
        <taxon>Pseudomonadota</taxon>
        <taxon>Gammaproteobacteria</taxon>
        <taxon>Enterobacterales</taxon>
        <taxon>Enterobacteriaceae</taxon>
        <taxon>Escherichia</taxon>
    </lineage>
</organism>
<dbReference type="EC" id="6.1.1.3" evidence="1"/>
<dbReference type="EMBL" id="CP000802">
    <property type="protein sequence ID" value="ABV06116.1"/>
    <property type="molecule type" value="Genomic_DNA"/>
</dbReference>
<dbReference type="RefSeq" id="WP_001144190.1">
    <property type="nucleotide sequence ID" value="NC_009800.1"/>
</dbReference>
<dbReference type="SMR" id="A8A0R2"/>
<dbReference type="GeneID" id="75205636"/>
<dbReference type="KEGG" id="ecx:EcHS_A1800"/>
<dbReference type="HOGENOM" id="CLU_008554_0_1_6"/>
<dbReference type="GO" id="GO:0005829">
    <property type="term" value="C:cytosol"/>
    <property type="evidence" value="ECO:0007669"/>
    <property type="project" value="TreeGrafter"/>
</dbReference>
<dbReference type="GO" id="GO:0005524">
    <property type="term" value="F:ATP binding"/>
    <property type="evidence" value="ECO:0007669"/>
    <property type="project" value="UniProtKB-UniRule"/>
</dbReference>
<dbReference type="GO" id="GO:0046872">
    <property type="term" value="F:metal ion binding"/>
    <property type="evidence" value="ECO:0007669"/>
    <property type="project" value="UniProtKB-KW"/>
</dbReference>
<dbReference type="GO" id="GO:0004829">
    <property type="term" value="F:threonine-tRNA ligase activity"/>
    <property type="evidence" value="ECO:0007669"/>
    <property type="project" value="UniProtKB-UniRule"/>
</dbReference>
<dbReference type="GO" id="GO:0000049">
    <property type="term" value="F:tRNA binding"/>
    <property type="evidence" value="ECO:0007669"/>
    <property type="project" value="UniProtKB-KW"/>
</dbReference>
<dbReference type="GO" id="GO:0006435">
    <property type="term" value="P:threonyl-tRNA aminoacylation"/>
    <property type="evidence" value="ECO:0007669"/>
    <property type="project" value="UniProtKB-UniRule"/>
</dbReference>
<dbReference type="CDD" id="cd01667">
    <property type="entry name" value="TGS_ThrRS"/>
    <property type="match status" value="1"/>
</dbReference>
<dbReference type="CDD" id="cd00860">
    <property type="entry name" value="ThrRS_anticodon"/>
    <property type="match status" value="1"/>
</dbReference>
<dbReference type="CDD" id="cd00771">
    <property type="entry name" value="ThrRS_core"/>
    <property type="match status" value="1"/>
</dbReference>
<dbReference type="FunFam" id="3.10.20.30:FF:000005">
    <property type="entry name" value="Threonine--tRNA ligase"/>
    <property type="match status" value="1"/>
</dbReference>
<dbReference type="FunFam" id="3.30.54.20:FF:000002">
    <property type="entry name" value="Threonine--tRNA ligase"/>
    <property type="match status" value="1"/>
</dbReference>
<dbReference type="FunFam" id="3.30.930.10:FF:000002">
    <property type="entry name" value="Threonine--tRNA ligase"/>
    <property type="match status" value="1"/>
</dbReference>
<dbReference type="FunFam" id="3.40.50.800:FF:000001">
    <property type="entry name" value="Threonine--tRNA ligase"/>
    <property type="match status" value="1"/>
</dbReference>
<dbReference type="FunFam" id="3.30.980.10:FF:000005">
    <property type="entry name" value="Threonyl-tRNA synthetase, mitochondrial"/>
    <property type="match status" value="1"/>
</dbReference>
<dbReference type="Gene3D" id="3.10.20.30">
    <property type="match status" value="1"/>
</dbReference>
<dbReference type="Gene3D" id="3.30.54.20">
    <property type="match status" value="1"/>
</dbReference>
<dbReference type="Gene3D" id="3.40.50.800">
    <property type="entry name" value="Anticodon-binding domain"/>
    <property type="match status" value="1"/>
</dbReference>
<dbReference type="Gene3D" id="3.30.930.10">
    <property type="entry name" value="Bira Bifunctional Protein, Domain 2"/>
    <property type="match status" value="1"/>
</dbReference>
<dbReference type="Gene3D" id="3.30.980.10">
    <property type="entry name" value="Threonyl-trna Synthetase, Chain A, domain 2"/>
    <property type="match status" value="1"/>
</dbReference>
<dbReference type="HAMAP" id="MF_00184">
    <property type="entry name" value="Thr_tRNA_synth"/>
    <property type="match status" value="1"/>
</dbReference>
<dbReference type="InterPro" id="IPR002314">
    <property type="entry name" value="aa-tRNA-synt_IIb"/>
</dbReference>
<dbReference type="InterPro" id="IPR006195">
    <property type="entry name" value="aa-tRNA-synth_II"/>
</dbReference>
<dbReference type="InterPro" id="IPR045864">
    <property type="entry name" value="aa-tRNA-synth_II/BPL/LPL"/>
</dbReference>
<dbReference type="InterPro" id="IPR004154">
    <property type="entry name" value="Anticodon-bd"/>
</dbReference>
<dbReference type="InterPro" id="IPR036621">
    <property type="entry name" value="Anticodon-bd_dom_sf"/>
</dbReference>
<dbReference type="InterPro" id="IPR012675">
    <property type="entry name" value="Beta-grasp_dom_sf"/>
</dbReference>
<dbReference type="InterPro" id="IPR004095">
    <property type="entry name" value="TGS"/>
</dbReference>
<dbReference type="InterPro" id="IPR012676">
    <property type="entry name" value="TGS-like"/>
</dbReference>
<dbReference type="InterPro" id="IPR002320">
    <property type="entry name" value="Thr-tRNA-ligase_IIa"/>
</dbReference>
<dbReference type="InterPro" id="IPR018163">
    <property type="entry name" value="Thr/Ala-tRNA-synth_IIc_edit"/>
</dbReference>
<dbReference type="InterPro" id="IPR047246">
    <property type="entry name" value="ThrRS_anticodon"/>
</dbReference>
<dbReference type="InterPro" id="IPR033728">
    <property type="entry name" value="ThrRS_core"/>
</dbReference>
<dbReference type="InterPro" id="IPR012947">
    <property type="entry name" value="tRNA_SAD"/>
</dbReference>
<dbReference type="NCBIfam" id="TIGR00418">
    <property type="entry name" value="thrS"/>
    <property type="match status" value="1"/>
</dbReference>
<dbReference type="PANTHER" id="PTHR11451:SF44">
    <property type="entry name" value="THREONINE--TRNA LIGASE, CHLOROPLASTIC_MITOCHONDRIAL 2"/>
    <property type="match status" value="1"/>
</dbReference>
<dbReference type="PANTHER" id="PTHR11451">
    <property type="entry name" value="THREONINE-TRNA LIGASE"/>
    <property type="match status" value="1"/>
</dbReference>
<dbReference type="Pfam" id="PF03129">
    <property type="entry name" value="HGTP_anticodon"/>
    <property type="match status" value="1"/>
</dbReference>
<dbReference type="Pfam" id="PF02824">
    <property type="entry name" value="TGS"/>
    <property type="match status" value="1"/>
</dbReference>
<dbReference type="Pfam" id="PF00587">
    <property type="entry name" value="tRNA-synt_2b"/>
    <property type="match status" value="1"/>
</dbReference>
<dbReference type="Pfam" id="PF07973">
    <property type="entry name" value="tRNA_SAD"/>
    <property type="match status" value="1"/>
</dbReference>
<dbReference type="PRINTS" id="PR01047">
    <property type="entry name" value="TRNASYNTHTHR"/>
</dbReference>
<dbReference type="SMART" id="SM00863">
    <property type="entry name" value="tRNA_SAD"/>
    <property type="match status" value="1"/>
</dbReference>
<dbReference type="SUPFAM" id="SSF52954">
    <property type="entry name" value="Class II aaRS ABD-related"/>
    <property type="match status" value="1"/>
</dbReference>
<dbReference type="SUPFAM" id="SSF55681">
    <property type="entry name" value="Class II aaRS and biotin synthetases"/>
    <property type="match status" value="1"/>
</dbReference>
<dbReference type="SUPFAM" id="SSF81271">
    <property type="entry name" value="TGS-like"/>
    <property type="match status" value="1"/>
</dbReference>
<dbReference type="SUPFAM" id="SSF55186">
    <property type="entry name" value="ThrRS/AlaRS common domain"/>
    <property type="match status" value="1"/>
</dbReference>
<dbReference type="PROSITE" id="PS50862">
    <property type="entry name" value="AA_TRNA_LIGASE_II"/>
    <property type="match status" value="1"/>
</dbReference>
<dbReference type="PROSITE" id="PS51880">
    <property type="entry name" value="TGS"/>
    <property type="match status" value="1"/>
</dbReference>
<proteinExistence type="inferred from homology"/>
<accession>A8A0R2</accession>
<feature type="chain" id="PRO_1000058425" description="Threonine--tRNA ligase">
    <location>
        <begin position="1"/>
        <end position="642"/>
    </location>
</feature>
<feature type="domain" description="TGS" evidence="2">
    <location>
        <begin position="1"/>
        <end position="61"/>
    </location>
</feature>
<feature type="region of interest" description="Catalytic" evidence="1">
    <location>
        <begin position="243"/>
        <end position="534"/>
    </location>
</feature>
<feature type="binding site" evidence="1">
    <location>
        <position position="334"/>
    </location>
    <ligand>
        <name>Zn(2+)</name>
        <dbReference type="ChEBI" id="CHEBI:29105"/>
    </ligand>
</feature>
<feature type="binding site" evidence="1">
    <location>
        <position position="385"/>
    </location>
    <ligand>
        <name>Zn(2+)</name>
        <dbReference type="ChEBI" id="CHEBI:29105"/>
    </ligand>
</feature>
<feature type="binding site" evidence="1">
    <location>
        <position position="511"/>
    </location>
    <ligand>
        <name>Zn(2+)</name>
        <dbReference type="ChEBI" id="CHEBI:29105"/>
    </ligand>
</feature>
<feature type="modified residue" description="N6-acetyllysine" evidence="1">
    <location>
        <position position="286"/>
    </location>
</feature>
<name>SYT_ECOHS</name>
<keyword id="KW-0007">Acetylation</keyword>
<keyword id="KW-0030">Aminoacyl-tRNA synthetase</keyword>
<keyword id="KW-0067">ATP-binding</keyword>
<keyword id="KW-0963">Cytoplasm</keyword>
<keyword id="KW-0436">Ligase</keyword>
<keyword id="KW-0479">Metal-binding</keyword>
<keyword id="KW-0547">Nucleotide-binding</keyword>
<keyword id="KW-0648">Protein biosynthesis</keyword>
<keyword id="KW-0694">RNA-binding</keyword>
<keyword id="KW-0820">tRNA-binding</keyword>
<keyword id="KW-0862">Zinc</keyword>
<gene>
    <name evidence="1" type="primary">thrS</name>
    <name type="ordered locus">EcHS_A1800</name>
</gene>
<protein>
    <recommendedName>
        <fullName evidence="1">Threonine--tRNA ligase</fullName>
        <ecNumber evidence="1">6.1.1.3</ecNumber>
    </recommendedName>
    <alternativeName>
        <fullName evidence="1">Threonyl-tRNA synthetase</fullName>
        <shortName evidence="1">ThrRS</shortName>
    </alternativeName>
</protein>
<sequence>MPVITLPDGSQRHYDHAVSPMDVALDIGPGLAKACIAGRVNGELVDACDLIENDAQLSIITAKDEDGLEIIRHSCAHLLGHAIKQLWPHTKMAIGPVIDNGFYYDVDLDRTLTQEDVEALEKRMHELAEKNYDVIKKKVSWHEARETFANRGESYKVSILDENIAHDDKPGLYFHEEYVDMCRGPHVPNMRFCHHFKLMKTAGAYWRGDSNNKMLQRIYGTAWADKKALNAYLQRLEEAAKRDHRKIGKQLDLYHMQEEAPGMVFWHNDGWTIFRELEVFVRSKLKEYQYQEVKGPFMMDRVLWEKTGHWDNYKDAMFTTSSENREYCIKPMNCPGHVQIFNQGLKSYRDLPLRMAEFGSCHRNEPSGSLHGLMRVRGFTQDDAHIFCTEEQIRDEVNGCIRLVYDMYSTFGFEKIVVKLSTRPEKRIGSDEMWDRAEADLAVALEENNIPFEYQLGEGAFYGPKIEFTLYDCLDRAWQCGTVQLDFSLPSRLSASYVGEDNERKVPVMIHRAILGSMERFIGILTEEFAGFFPTWLAPVQVVIMNITDSQSDYVNELTQKLSNAGIRVKADLRNEKIGFKIREHTLRRVPYMLVCGDKEVESGKVAVRTRRGKDLGSMDVNEVIEKLQQEIRSRSLKQLEE</sequence>